<gene>
    <name evidence="1" type="primary">pgl</name>
    <name type="ordered locus">E2348C_0644</name>
</gene>
<organism>
    <name type="scientific">Escherichia coli O127:H6 (strain E2348/69 / EPEC)</name>
    <dbReference type="NCBI Taxonomy" id="574521"/>
    <lineage>
        <taxon>Bacteria</taxon>
        <taxon>Pseudomonadati</taxon>
        <taxon>Pseudomonadota</taxon>
        <taxon>Gammaproteobacteria</taxon>
        <taxon>Enterobacterales</taxon>
        <taxon>Enterobacteriaceae</taxon>
        <taxon>Escherichia</taxon>
    </lineage>
</organism>
<feature type="chain" id="PRO_1000185835" description="6-phosphogluconolactonase">
    <location>
        <begin position="1"/>
        <end position="331"/>
    </location>
</feature>
<feature type="modified residue" description="N6-acetyllysine" evidence="1">
    <location>
        <position position="287"/>
    </location>
</feature>
<sequence length="331" mass="36293">MKQTVYIASPESQQIHVWNLNHEGALTLTQVVDVPGQVQPMVVSPDKRYLYVGVRPEFRVLAYRIAPDDGALTFAAESALPGSPTHISTDHLGQFVFVGSYNAGNVSVTRLEDGLPVGVVDVVEGLDGCHSANISPDNRTLWVPALKQDRICLFTVSDDGHLVAQDPAEVTTVEGAGPRHMVFHPNEQYAYCVNELNSSVDVWELKDPHGNIECVQTLDMMPENFSDTRWAADIHITPDGRHLYACDRTASLITVFSVSEDGSVLSKEGFQPTETQPRGFNVDHSGKYLIAAGQKSHHISVYEIVGEQGLLHEKGRYAVGQGPMWVVVNAH</sequence>
<dbReference type="EC" id="3.1.1.31" evidence="1"/>
<dbReference type="EMBL" id="FM180568">
    <property type="protein sequence ID" value="CAS08192.1"/>
    <property type="molecule type" value="Genomic_DNA"/>
</dbReference>
<dbReference type="RefSeq" id="WP_000815414.1">
    <property type="nucleotide sequence ID" value="NC_011601.1"/>
</dbReference>
<dbReference type="SMR" id="B7ULP0"/>
<dbReference type="KEGG" id="ecg:E2348C_0644"/>
<dbReference type="HOGENOM" id="CLU_038716_2_0_6"/>
<dbReference type="UniPathway" id="UPA00115">
    <property type="reaction ID" value="UER00409"/>
</dbReference>
<dbReference type="Proteomes" id="UP000008205">
    <property type="component" value="Chromosome"/>
</dbReference>
<dbReference type="GO" id="GO:0005829">
    <property type="term" value="C:cytosol"/>
    <property type="evidence" value="ECO:0007669"/>
    <property type="project" value="TreeGrafter"/>
</dbReference>
<dbReference type="GO" id="GO:0017057">
    <property type="term" value="F:6-phosphogluconolactonase activity"/>
    <property type="evidence" value="ECO:0007669"/>
    <property type="project" value="UniProtKB-UniRule"/>
</dbReference>
<dbReference type="GO" id="GO:0006006">
    <property type="term" value="P:glucose metabolic process"/>
    <property type="evidence" value="ECO:0007669"/>
    <property type="project" value="UniProtKB-KW"/>
</dbReference>
<dbReference type="GO" id="GO:0009051">
    <property type="term" value="P:pentose-phosphate shunt, oxidative branch"/>
    <property type="evidence" value="ECO:0007669"/>
    <property type="project" value="UniProtKB-UniRule"/>
</dbReference>
<dbReference type="FunFam" id="2.130.10.10:FF:000051">
    <property type="entry name" value="6-phosphogluconolactonase"/>
    <property type="match status" value="1"/>
</dbReference>
<dbReference type="Gene3D" id="2.130.10.10">
    <property type="entry name" value="YVTN repeat-like/Quinoprotein amine dehydrogenase"/>
    <property type="match status" value="1"/>
</dbReference>
<dbReference type="HAMAP" id="MF_01605">
    <property type="entry name" value="6P_gluconolactonase"/>
    <property type="match status" value="1"/>
</dbReference>
<dbReference type="InterPro" id="IPR022528">
    <property type="entry name" value="6-phosphogluconolactonase_YbhE"/>
</dbReference>
<dbReference type="InterPro" id="IPR050282">
    <property type="entry name" value="Cycloisomerase_2"/>
</dbReference>
<dbReference type="InterPro" id="IPR019405">
    <property type="entry name" value="Lactonase_7-beta_prop"/>
</dbReference>
<dbReference type="InterPro" id="IPR011045">
    <property type="entry name" value="N2O_reductase_N"/>
</dbReference>
<dbReference type="InterPro" id="IPR015943">
    <property type="entry name" value="WD40/YVTN_repeat-like_dom_sf"/>
</dbReference>
<dbReference type="NCBIfam" id="NF008258">
    <property type="entry name" value="PRK11028.1"/>
    <property type="match status" value="1"/>
</dbReference>
<dbReference type="PANTHER" id="PTHR30344:SF1">
    <property type="entry name" value="6-PHOSPHOGLUCONOLACTONASE"/>
    <property type="match status" value="1"/>
</dbReference>
<dbReference type="PANTHER" id="PTHR30344">
    <property type="entry name" value="6-PHOSPHOGLUCONOLACTONASE-RELATED"/>
    <property type="match status" value="1"/>
</dbReference>
<dbReference type="Pfam" id="PF10282">
    <property type="entry name" value="Lactonase"/>
    <property type="match status" value="1"/>
</dbReference>
<dbReference type="SUPFAM" id="SSF50974">
    <property type="entry name" value="Nitrous oxide reductase, N-terminal domain"/>
    <property type="match status" value="1"/>
</dbReference>
<comment type="function">
    <text evidence="1">Catalyzes the hydrolysis of 6-phosphogluconolactone to 6-phosphogluconate.</text>
</comment>
<comment type="catalytic activity">
    <reaction evidence="1">
        <text>6-phospho-D-glucono-1,5-lactone + H2O = 6-phospho-D-gluconate + H(+)</text>
        <dbReference type="Rhea" id="RHEA:12556"/>
        <dbReference type="ChEBI" id="CHEBI:15377"/>
        <dbReference type="ChEBI" id="CHEBI:15378"/>
        <dbReference type="ChEBI" id="CHEBI:57955"/>
        <dbReference type="ChEBI" id="CHEBI:58759"/>
        <dbReference type="EC" id="3.1.1.31"/>
    </reaction>
</comment>
<comment type="pathway">
    <text evidence="1">Carbohydrate degradation; pentose phosphate pathway; D-ribulose 5-phosphate from D-glucose 6-phosphate (oxidative stage): step 2/3.</text>
</comment>
<comment type="similarity">
    <text evidence="1">Belongs to the cycloisomerase 2 family.</text>
</comment>
<reference key="1">
    <citation type="journal article" date="2009" name="J. Bacteriol.">
        <title>Complete genome sequence and comparative genome analysis of enteropathogenic Escherichia coli O127:H6 strain E2348/69.</title>
        <authorList>
            <person name="Iguchi A."/>
            <person name="Thomson N.R."/>
            <person name="Ogura Y."/>
            <person name="Saunders D."/>
            <person name="Ooka T."/>
            <person name="Henderson I.R."/>
            <person name="Harris D."/>
            <person name="Asadulghani M."/>
            <person name="Kurokawa K."/>
            <person name="Dean P."/>
            <person name="Kenny B."/>
            <person name="Quail M.A."/>
            <person name="Thurston S."/>
            <person name="Dougan G."/>
            <person name="Hayashi T."/>
            <person name="Parkhill J."/>
            <person name="Frankel G."/>
        </authorList>
    </citation>
    <scope>NUCLEOTIDE SEQUENCE [LARGE SCALE GENOMIC DNA]</scope>
    <source>
        <strain>E2348/69 / EPEC</strain>
    </source>
</reference>
<keyword id="KW-0007">Acetylation</keyword>
<keyword id="KW-0119">Carbohydrate metabolism</keyword>
<keyword id="KW-0313">Glucose metabolism</keyword>
<keyword id="KW-0378">Hydrolase</keyword>
<keyword id="KW-1185">Reference proteome</keyword>
<protein>
    <recommendedName>
        <fullName evidence="1">6-phosphogluconolactonase</fullName>
        <shortName evidence="1">6-P-gluconolactonase</shortName>
        <ecNumber evidence="1">3.1.1.31</ecNumber>
    </recommendedName>
</protein>
<evidence type="ECO:0000255" key="1">
    <source>
        <dbReference type="HAMAP-Rule" id="MF_01605"/>
    </source>
</evidence>
<accession>B7ULP0</accession>
<proteinExistence type="inferred from homology"/>
<name>6PGL_ECO27</name>